<protein>
    <recommendedName>
        <fullName evidence="2">Elongation factor 1-alpha</fullName>
        <shortName evidence="2">EF-1-alpha</shortName>
        <ecNumber evidence="2">3.6.5.3</ecNumber>
    </recommendedName>
    <alternativeName>
        <fullName evidence="2">Elongation factor Tu</fullName>
        <shortName evidence="2">EF-Tu</shortName>
    </alternativeName>
</protein>
<comment type="function">
    <text evidence="2">GTP hydrolase that promotes the GTP-dependent binding of aminoacyl-tRNA to the A-site of ribosomes during protein biosynthesis.</text>
</comment>
<comment type="catalytic activity">
    <reaction evidence="2">
        <text>GTP + H2O = GDP + phosphate + H(+)</text>
        <dbReference type="Rhea" id="RHEA:19669"/>
        <dbReference type="ChEBI" id="CHEBI:15377"/>
        <dbReference type="ChEBI" id="CHEBI:15378"/>
        <dbReference type="ChEBI" id="CHEBI:37565"/>
        <dbReference type="ChEBI" id="CHEBI:43474"/>
        <dbReference type="ChEBI" id="CHEBI:58189"/>
        <dbReference type="EC" id="3.6.5.3"/>
    </reaction>
    <physiologicalReaction direction="left-to-right" evidence="2">
        <dbReference type="Rhea" id="RHEA:19670"/>
    </physiologicalReaction>
</comment>
<comment type="subcellular location">
    <subcellularLocation>
        <location evidence="2">Cytoplasm</location>
    </subcellularLocation>
</comment>
<comment type="similarity">
    <text evidence="2">Belongs to the TRAFAC class translation factor GTPase superfamily. Classic translation factor GTPase family. EF-Tu/EF-1A subfamily.</text>
</comment>
<comment type="sequence caution" evidence="3">
    <conflict type="erroneous initiation">
        <sequence resource="EMBL-CDS" id="ABQ87103"/>
    </conflict>
</comment>
<accession>A5ULM5</accession>
<evidence type="ECO:0000250" key="1"/>
<evidence type="ECO:0000255" key="2">
    <source>
        <dbReference type="HAMAP-Rule" id="MF_00118"/>
    </source>
</evidence>
<evidence type="ECO:0000305" key="3"/>
<reference key="1">
    <citation type="journal article" date="2007" name="Proc. Natl. Acad. Sci. U.S.A.">
        <title>Genomic and metabolic adaptations of Methanobrevibacter smithii to the human gut.</title>
        <authorList>
            <person name="Samuel B.S."/>
            <person name="Hansen E.E."/>
            <person name="Manchester J.K."/>
            <person name="Coutinho P.M."/>
            <person name="Henrissat B."/>
            <person name="Fulton R."/>
            <person name="Latreille P."/>
            <person name="Kim K."/>
            <person name="Wilson R.K."/>
            <person name="Gordon J.I."/>
        </authorList>
    </citation>
    <scope>NUCLEOTIDE SEQUENCE [LARGE SCALE GENOMIC DNA]</scope>
    <source>
        <strain>ATCC 35061 / DSM 861 / OCM 144 / PS</strain>
    </source>
</reference>
<organism>
    <name type="scientific">Methanobrevibacter smithii (strain ATCC 35061 / DSM 861 / OCM 144 / PS)</name>
    <dbReference type="NCBI Taxonomy" id="420247"/>
    <lineage>
        <taxon>Archaea</taxon>
        <taxon>Methanobacteriati</taxon>
        <taxon>Methanobacteriota</taxon>
        <taxon>Methanomada group</taxon>
        <taxon>Methanobacteria</taxon>
        <taxon>Methanobacteriales</taxon>
        <taxon>Methanobacteriaceae</taxon>
        <taxon>Methanobrevibacter</taxon>
    </lineage>
</organism>
<name>EF1A_METS3</name>
<sequence length="413" mass="44635">MAKTKEHINLAFIGHVDHGKSTLVGHLLLKAGAIAEQQLDDGENKFRFVMDKLGEERERGVTIDLAHQKFSTKKYDYTVVDCPGHRDFVKNMITGASQADAGVLVVAADDGVMPQTKEHVFLSKTLGINQLIVAINKIDLVDYDEAKFNELKDEVSALIKTVGFNPADVPFIPVSAFEGDNIKDASPNTSWYKGDTLMQALDNLAAPEKPVSLPLRIPIQDVYSITGVGTVPVGRVETGVMKKGENVIFEPAGASGEVKSIEMHHETFETAEPGDNIGFNVRGVGKNDIRRGDVAGHVDDAPAVAKEFDAQIVVLQHPGVITVGYTPVFHCHTSQVACTFLELTAKLDPATGQVAEENPDFLKTGNAAFVKVKPTKPMVIENAKKIPQMGRFAIRDMGQTVAAGLCIDVTPAK</sequence>
<dbReference type="EC" id="3.6.5.3" evidence="2"/>
<dbReference type="EMBL" id="CP000678">
    <property type="protein sequence ID" value="ABQ87103.1"/>
    <property type="status" value="ALT_INIT"/>
    <property type="molecule type" value="Genomic_DNA"/>
</dbReference>
<dbReference type="RefSeq" id="WP_048058615.1">
    <property type="nucleotide sequence ID" value="NZ_CP117965.1"/>
</dbReference>
<dbReference type="SMR" id="A5ULM5"/>
<dbReference type="STRING" id="420247.Msm_0898"/>
<dbReference type="EnsemblBacteria" id="ABQ87103">
    <property type="protein sequence ID" value="ABQ87103"/>
    <property type="gene ID" value="Msm_0898"/>
</dbReference>
<dbReference type="GeneID" id="78817533"/>
<dbReference type="KEGG" id="msi:Msm_0898"/>
<dbReference type="PATRIC" id="fig|420247.28.peg.895"/>
<dbReference type="eggNOG" id="arCOG01561">
    <property type="taxonomic scope" value="Archaea"/>
</dbReference>
<dbReference type="HOGENOM" id="CLU_007265_3_5_2"/>
<dbReference type="Proteomes" id="UP000001992">
    <property type="component" value="Chromosome"/>
</dbReference>
<dbReference type="GO" id="GO:0005737">
    <property type="term" value="C:cytoplasm"/>
    <property type="evidence" value="ECO:0007669"/>
    <property type="project" value="UniProtKB-SubCell"/>
</dbReference>
<dbReference type="GO" id="GO:0005525">
    <property type="term" value="F:GTP binding"/>
    <property type="evidence" value="ECO:0007669"/>
    <property type="project" value="UniProtKB-UniRule"/>
</dbReference>
<dbReference type="GO" id="GO:0003924">
    <property type="term" value="F:GTPase activity"/>
    <property type="evidence" value="ECO:0007669"/>
    <property type="project" value="InterPro"/>
</dbReference>
<dbReference type="GO" id="GO:0003746">
    <property type="term" value="F:translation elongation factor activity"/>
    <property type="evidence" value="ECO:0007669"/>
    <property type="project" value="UniProtKB-UniRule"/>
</dbReference>
<dbReference type="CDD" id="cd01883">
    <property type="entry name" value="EF1_alpha"/>
    <property type="match status" value="1"/>
</dbReference>
<dbReference type="CDD" id="cd03693">
    <property type="entry name" value="EF1_alpha_II"/>
    <property type="match status" value="1"/>
</dbReference>
<dbReference type="CDD" id="cd03705">
    <property type="entry name" value="EF1_alpha_III"/>
    <property type="match status" value="1"/>
</dbReference>
<dbReference type="FunFam" id="2.40.30.10:FF:000003">
    <property type="entry name" value="Elongation factor 1-alpha"/>
    <property type="match status" value="1"/>
</dbReference>
<dbReference type="FunFam" id="2.40.30.10:FF:000005">
    <property type="entry name" value="Elongation factor 1-alpha"/>
    <property type="match status" value="1"/>
</dbReference>
<dbReference type="Gene3D" id="3.40.50.300">
    <property type="entry name" value="P-loop containing nucleotide triphosphate hydrolases"/>
    <property type="match status" value="1"/>
</dbReference>
<dbReference type="Gene3D" id="2.40.30.10">
    <property type="entry name" value="Translation factors"/>
    <property type="match status" value="2"/>
</dbReference>
<dbReference type="HAMAP" id="MF_00118_A">
    <property type="entry name" value="EF_Tu_A"/>
    <property type="match status" value="1"/>
</dbReference>
<dbReference type="InterPro" id="IPR004161">
    <property type="entry name" value="EFTu-like_2"/>
</dbReference>
<dbReference type="InterPro" id="IPR031157">
    <property type="entry name" value="G_TR_CS"/>
</dbReference>
<dbReference type="InterPro" id="IPR054696">
    <property type="entry name" value="GTP-eEF1A_C"/>
</dbReference>
<dbReference type="InterPro" id="IPR027417">
    <property type="entry name" value="P-loop_NTPase"/>
</dbReference>
<dbReference type="InterPro" id="IPR005225">
    <property type="entry name" value="Small_GTP-bd"/>
</dbReference>
<dbReference type="InterPro" id="IPR000795">
    <property type="entry name" value="T_Tr_GTP-bd_dom"/>
</dbReference>
<dbReference type="InterPro" id="IPR050100">
    <property type="entry name" value="TRAFAC_GTPase_members"/>
</dbReference>
<dbReference type="InterPro" id="IPR009000">
    <property type="entry name" value="Transl_B-barrel_sf"/>
</dbReference>
<dbReference type="InterPro" id="IPR009001">
    <property type="entry name" value="Transl_elong_EF1A/Init_IF2_C"/>
</dbReference>
<dbReference type="InterPro" id="IPR004539">
    <property type="entry name" value="Transl_elong_EF1A_euk/arc"/>
</dbReference>
<dbReference type="NCBIfam" id="TIGR00483">
    <property type="entry name" value="EF-1_alpha"/>
    <property type="match status" value="1"/>
</dbReference>
<dbReference type="NCBIfam" id="NF008969">
    <property type="entry name" value="PRK12317.1"/>
    <property type="match status" value="1"/>
</dbReference>
<dbReference type="NCBIfam" id="TIGR00231">
    <property type="entry name" value="small_GTP"/>
    <property type="match status" value="1"/>
</dbReference>
<dbReference type="PANTHER" id="PTHR23115">
    <property type="entry name" value="TRANSLATION FACTOR"/>
    <property type="match status" value="1"/>
</dbReference>
<dbReference type="Pfam" id="PF22594">
    <property type="entry name" value="GTP-eEF1A_C"/>
    <property type="match status" value="1"/>
</dbReference>
<dbReference type="Pfam" id="PF00009">
    <property type="entry name" value="GTP_EFTU"/>
    <property type="match status" value="1"/>
</dbReference>
<dbReference type="Pfam" id="PF03144">
    <property type="entry name" value="GTP_EFTU_D2"/>
    <property type="match status" value="1"/>
</dbReference>
<dbReference type="PRINTS" id="PR00315">
    <property type="entry name" value="ELONGATNFCT"/>
</dbReference>
<dbReference type="SUPFAM" id="SSF50465">
    <property type="entry name" value="EF-Tu/eEF-1alpha/eIF2-gamma C-terminal domain"/>
    <property type="match status" value="1"/>
</dbReference>
<dbReference type="SUPFAM" id="SSF52540">
    <property type="entry name" value="P-loop containing nucleoside triphosphate hydrolases"/>
    <property type="match status" value="1"/>
</dbReference>
<dbReference type="SUPFAM" id="SSF50447">
    <property type="entry name" value="Translation proteins"/>
    <property type="match status" value="1"/>
</dbReference>
<dbReference type="PROSITE" id="PS00301">
    <property type="entry name" value="G_TR_1"/>
    <property type="match status" value="1"/>
</dbReference>
<dbReference type="PROSITE" id="PS51722">
    <property type="entry name" value="G_TR_2"/>
    <property type="match status" value="1"/>
</dbReference>
<keyword id="KW-0963">Cytoplasm</keyword>
<keyword id="KW-0251">Elongation factor</keyword>
<keyword id="KW-0342">GTP-binding</keyword>
<keyword id="KW-0378">Hydrolase</keyword>
<keyword id="KW-0460">Magnesium</keyword>
<keyword id="KW-0479">Metal-binding</keyword>
<keyword id="KW-0547">Nucleotide-binding</keyword>
<keyword id="KW-0648">Protein biosynthesis</keyword>
<feature type="chain" id="PRO_0000337605" description="Elongation factor 1-alpha">
    <location>
        <begin position="1"/>
        <end position="413"/>
    </location>
</feature>
<feature type="domain" description="tr-type G">
    <location>
        <begin position="5"/>
        <end position="211"/>
    </location>
</feature>
<feature type="region of interest" description="G1" evidence="1">
    <location>
        <begin position="14"/>
        <end position="21"/>
    </location>
</feature>
<feature type="region of interest" description="G2" evidence="1">
    <location>
        <begin position="60"/>
        <end position="64"/>
    </location>
</feature>
<feature type="region of interest" description="G3" evidence="1">
    <location>
        <begin position="81"/>
        <end position="84"/>
    </location>
</feature>
<feature type="region of interest" description="G4" evidence="1">
    <location>
        <begin position="136"/>
        <end position="139"/>
    </location>
</feature>
<feature type="region of interest" description="G5" evidence="1">
    <location>
        <begin position="175"/>
        <end position="177"/>
    </location>
</feature>
<feature type="binding site" evidence="2">
    <location>
        <begin position="14"/>
        <end position="21"/>
    </location>
    <ligand>
        <name>GTP</name>
        <dbReference type="ChEBI" id="CHEBI:37565"/>
    </ligand>
</feature>
<feature type="binding site" evidence="2">
    <location>
        <position position="21"/>
    </location>
    <ligand>
        <name>Mg(2+)</name>
        <dbReference type="ChEBI" id="CHEBI:18420"/>
    </ligand>
</feature>
<feature type="binding site" evidence="2">
    <location>
        <begin position="81"/>
        <end position="85"/>
    </location>
    <ligand>
        <name>GTP</name>
        <dbReference type="ChEBI" id="CHEBI:37565"/>
    </ligand>
</feature>
<feature type="binding site" evidence="2">
    <location>
        <begin position="136"/>
        <end position="139"/>
    </location>
    <ligand>
        <name>GTP</name>
        <dbReference type="ChEBI" id="CHEBI:37565"/>
    </ligand>
</feature>
<gene>
    <name evidence="2" type="primary">tuf</name>
    <name type="ordered locus">Msm_0898</name>
</gene>
<proteinExistence type="inferred from homology"/>